<organism>
    <name type="scientific">Sclerotinia sclerotiorum (strain ATCC 18683 / 1980 / Ss-1)</name>
    <name type="common">White mold</name>
    <name type="synonym">Whetzelinia sclerotiorum</name>
    <dbReference type="NCBI Taxonomy" id="665079"/>
    <lineage>
        <taxon>Eukaryota</taxon>
        <taxon>Fungi</taxon>
        <taxon>Dikarya</taxon>
        <taxon>Ascomycota</taxon>
        <taxon>Pezizomycotina</taxon>
        <taxon>Leotiomycetes</taxon>
        <taxon>Helotiales</taxon>
        <taxon>Sclerotiniaceae</taxon>
        <taxon>Sclerotinia</taxon>
    </lineage>
</organism>
<sequence length="456" mass="49582">MDCAEEKAKSLRRQIADTEAELAQLKLQLLSLEEKDTNSKNLEAKTSASEKDDPVTHIENKWPMSLEEYKRYGRQMIVPDIGIKGQLRLKSASILLVGAGGLGCPAAAYIAGAGVGTIGIVDGDIVEESNLHRQILHSTDRVGVNKAGIVKDYDIVLDCTDHPTSRYLISDICVLLQKPLVSASALRTDGQLIVLNNPALPPGDLSGGSCYRCVFPKPPPPEAVTSCGDGGIIGPVVGVMGVLQALEAIKLIASGKLAAVGENDNTSPTPKMNPTTMLLFSTNGSTPFRNVRLKGRRSNCFACGEEAQLALEQMSSGSMDYVLFCGMTHPVKLLSDEERIEARDYDSIRKEKEHLLIDVREKVQFDICNIEGSYNIPFSSFQGSKGSSDHPLSTLTENLNPKTPIYVVCRLGNDSQIVTKKMKDLGLDQKGDRYIGDIKGGLRSWKEQVDGSWPEY</sequence>
<accession>A7F582</accession>
<dbReference type="EC" id="2.7.7.80" evidence="3"/>
<dbReference type="EC" id="2.8.1.11" evidence="3"/>
<dbReference type="EMBL" id="CH476642">
    <property type="protein sequence ID" value="EDN97903.1"/>
    <property type="molecule type" value="Genomic_DNA"/>
</dbReference>
<dbReference type="RefSeq" id="XP_001586182.1">
    <property type="nucleotide sequence ID" value="XM_001586132.1"/>
</dbReference>
<dbReference type="SMR" id="A7F582"/>
<dbReference type="FunCoup" id="A7F582">
    <property type="interactions" value="793"/>
</dbReference>
<dbReference type="STRING" id="665079.A7F582"/>
<dbReference type="GeneID" id="5482455"/>
<dbReference type="KEGG" id="ssl:SS1G_12757"/>
<dbReference type="InParanoid" id="A7F582"/>
<dbReference type="OMA" id="IPDVGMD"/>
<dbReference type="UniPathway" id="UPA00988"/>
<dbReference type="Proteomes" id="UP000001312">
    <property type="component" value="Unassembled WGS sequence"/>
</dbReference>
<dbReference type="GO" id="GO:0005737">
    <property type="term" value="C:cytoplasm"/>
    <property type="evidence" value="ECO:0000318"/>
    <property type="project" value="GO_Central"/>
</dbReference>
<dbReference type="GO" id="GO:0005829">
    <property type="term" value="C:cytosol"/>
    <property type="evidence" value="ECO:0007669"/>
    <property type="project" value="InterPro"/>
</dbReference>
<dbReference type="GO" id="GO:0005524">
    <property type="term" value="F:ATP binding"/>
    <property type="evidence" value="ECO:0007669"/>
    <property type="project" value="UniProtKB-KW"/>
</dbReference>
<dbReference type="GO" id="GO:0046872">
    <property type="term" value="F:metal ion binding"/>
    <property type="evidence" value="ECO:0007669"/>
    <property type="project" value="UniProtKB-KW"/>
</dbReference>
<dbReference type="GO" id="GO:0061605">
    <property type="term" value="F:molybdopterin-synthase adenylyltransferase activity"/>
    <property type="evidence" value="ECO:0007669"/>
    <property type="project" value="UniProtKB-EC"/>
</dbReference>
<dbReference type="GO" id="GO:0061604">
    <property type="term" value="F:molybdopterin-synthase sulfurtransferase activity"/>
    <property type="evidence" value="ECO:0007669"/>
    <property type="project" value="UniProtKB-EC"/>
</dbReference>
<dbReference type="GO" id="GO:0016779">
    <property type="term" value="F:nucleotidyltransferase activity"/>
    <property type="evidence" value="ECO:0000318"/>
    <property type="project" value="GO_Central"/>
</dbReference>
<dbReference type="GO" id="GO:0004792">
    <property type="term" value="F:thiosulfate-cyanide sulfurtransferase activity"/>
    <property type="evidence" value="ECO:0000318"/>
    <property type="project" value="GO_Central"/>
</dbReference>
<dbReference type="GO" id="GO:0042292">
    <property type="term" value="F:URM1 activating enzyme activity"/>
    <property type="evidence" value="ECO:0000318"/>
    <property type="project" value="GO_Central"/>
</dbReference>
<dbReference type="GO" id="GO:0006777">
    <property type="term" value="P:Mo-molybdopterin cofactor biosynthetic process"/>
    <property type="evidence" value="ECO:0007669"/>
    <property type="project" value="UniProtKB-UniRule"/>
</dbReference>
<dbReference type="GO" id="GO:0032447">
    <property type="term" value="P:protein urmylation"/>
    <property type="evidence" value="ECO:0000318"/>
    <property type="project" value="GO_Central"/>
</dbReference>
<dbReference type="GO" id="GO:0002143">
    <property type="term" value="P:tRNA wobble position uridine thiolation"/>
    <property type="evidence" value="ECO:0000318"/>
    <property type="project" value="GO_Central"/>
</dbReference>
<dbReference type="CDD" id="cd00757">
    <property type="entry name" value="ThiF_MoeB_HesA_family"/>
    <property type="match status" value="1"/>
</dbReference>
<dbReference type="FunFam" id="3.40.250.10:FF:000014">
    <property type="entry name" value="Adenylyltransferase and sulfurtransferase MOCS3"/>
    <property type="match status" value="1"/>
</dbReference>
<dbReference type="FunFam" id="3.40.50.720:FF:000748">
    <property type="entry name" value="Adenylyltransferase and sulfurtransferase MOCS3"/>
    <property type="match status" value="1"/>
</dbReference>
<dbReference type="Gene3D" id="3.40.50.720">
    <property type="entry name" value="NAD(P)-binding Rossmann-like Domain"/>
    <property type="match status" value="2"/>
</dbReference>
<dbReference type="Gene3D" id="3.40.250.10">
    <property type="entry name" value="Rhodanese-like domain"/>
    <property type="match status" value="1"/>
</dbReference>
<dbReference type="HAMAP" id="MF_03049">
    <property type="entry name" value="MOCS3_Uba4"/>
    <property type="match status" value="1"/>
</dbReference>
<dbReference type="InterPro" id="IPR028885">
    <property type="entry name" value="MOCS3/Uba4"/>
</dbReference>
<dbReference type="InterPro" id="IPR001763">
    <property type="entry name" value="Rhodanese-like_dom"/>
</dbReference>
<dbReference type="InterPro" id="IPR036873">
    <property type="entry name" value="Rhodanese-like_dom_sf"/>
</dbReference>
<dbReference type="InterPro" id="IPR045886">
    <property type="entry name" value="ThiF/MoeB/HesA"/>
</dbReference>
<dbReference type="InterPro" id="IPR000594">
    <property type="entry name" value="ThiF_NAD_FAD-bd"/>
</dbReference>
<dbReference type="InterPro" id="IPR035985">
    <property type="entry name" value="Ubiquitin-activating_enz"/>
</dbReference>
<dbReference type="PANTHER" id="PTHR10953:SF102">
    <property type="entry name" value="ADENYLYLTRANSFERASE AND SULFURTRANSFERASE MOCS3"/>
    <property type="match status" value="1"/>
</dbReference>
<dbReference type="PANTHER" id="PTHR10953">
    <property type="entry name" value="UBIQUITIN-ACTIVATING ENZYME E1"/>
    <property type="match status" value="1"/>
</dbReference>
<dbReference type="Pfam" id="PF00581">
    <property type="entry name" value="Rhodanese"/>
    <property type="match status" value="1"/>
</dbReference>
<dbReference type="Pfam" id="PF00899">
    <property type="entry name" value="ThiF"/>
    <property type="match status" value="1"/>
</dbReference>
<dbReference type="SMART" id="SM00450">
    <property type="entry name" value="RHOD"/>
    <property type="match status" value="1"/>
</dbReference>
<dbReference type="SUPFAM" id="SSF69572">
    <property type="entry name" value="Activating enzymes of the ubiquitin-like proteins"/>
    <property type="match status" value="1"/>
</dbReference>
<dbReference type="PROSITE" id="PS50206">
    <property type="entry name" value="RHODANESE_3"/>
    <property type="match status" value="1"/>
</dbReference>
<feature type="chain" id="PRO_0000369233" description="Adenylyltransferase and sulfurtransferase uba4">
    <location>
        <begin position="1"/>
        <end position="456"/>
    </location>
</feature>
<feature type="domain" description="Rhodanese" evidence="3">
    <location>
        <begin position="350"/>
        <end position="454"/>
    </location>
</feature>
<feature type="active site" description="Glycyl thioester intermediate; for adenylyltransferase activity" evidence="3">
    <location>
        <position position="227"/>
    </location>
</feature>
<feature type="active site" description="Cysteine persulfide intermediate; for sulfurtransferase activity" evidence="3">
    <location>
        <position position="409"/>
    </location>
</feature>
<feature type="binding site" evidence="3">
    <location>
        <position position="101"/>
    </location>
    <ligand>
        <name>ATP</name>
        <dbReference type="ChEBI" id="CHEBI:30616"/>
    </ligand>
</feature>
<feature type="binding site" evidence="3">
    <location>
        <position position="122"/>
    </location>
    <ligand>
        <name>ATP</name>
        <dbReference type="ChEBI" id="CHEBI:30616"/>
    </ligand>
</feature>
<feature type="binding site" evidence="3">
    <location>
        <begin position="129"/>
        <end position="133"/>
    </location>
    <ligand>
        <name>ATP</name>
        <dbReference type="ChEBI" id="CHEBI:30616"/>
    </ligand>
</feature>
<feature type="binding site" evidence="3">
    <location>
        <position position="146"/>
    </location>
    <ligand>
        <name>ATP</name>
        <dbReference type="ChEBI" id="CHEBI:30616"/>
    </ligand>
</feature>
<feature type="binding site" evidence="3">
    <location>
        <begin position="161"/>
        <end position="162"/>
    </location>
    <ligand>
        <name>ATP</name>
        <dbReference type="ChEBI" id="CHEBI:30616"/>
    </ligand>
</feature>
<feature type="binding site" evidence="3">
    <location>
        <position position="210"/>
    </location>
    <ligand>
        <name>Zn(2+)</name>
        <dbReference type="ChEBI" id="CHEBI:29105"/>
    </ligand>
</feature>
<feature type="binding site" evidence="3">
    <location>
        <position position="213"/>
    </location>
    <ligand>
        <name>Zn(2+)</name>
        <dbReference type="ChEBI" id="CHEBI:29105"/>
    </ligand>
</feature>
<feature type="binding site" evidence="3">
    <location>
        <position position="300"/>
    </location>
    <ligand>
        <name>Zn(2+)</name>
        <dbReference type="ChEBI" id="CHEBI:29105"/>
    </ligand>
</feature>
<feature type="binding site" evidence="3">
    <location>
        <position position="303"/>
    </location>
    <ligand>
        <name>Zn(2+)</name>
        <dbReference type="ChEBI" id="CHEBI:29105"/>
    </ligand>
</feature>
<gene>
    <name evidence="3" type="primary">uba4</name>
    <name evidence="3" type="synonym">cnxF</name>
    <name type="ORF">SS1G_12757</name>
</gene>
<name>UBA4_SCLS1</name>
<comment type="function">
    <text evidence="1">Plays a central role in 2-thiolation of mcm(5)S(2)U at tRNA wobble positions of cytosolic tRNA(Lys), tRNA(Glu) and tRNA(Gln). Also essential during biosynthesis of the molybdenum cofactor. Acts by mediating the C-terminal thiocarboxylation of sulfur carriers urm1 and mocs2a. Its N-terminus first activates urm1 and mocs2a as acyl-adenylates (-COAMP), then the persulfide sulfur on the catalytic cysteine is transferred to urm1 and mocs2a to form thiocarboxylation (-COSH) of their C-terminus. The reaction probably involves hydrogen sulfide that is generated from the persulfide intermediate and that acts as a nucleophile towards urm1 and mocs2a. Subsequently, a transient disulfide bond is formed. Does not use thiosulfate as sulfur donor; nfs1 probably acting as a sulfur donor for thiocarboxylation reactions (By similarity).</text>
</comment>
<comment type="catalytic activity">
    <reaction evidence="3">
        <text>[molybdopterin-synthase sulfur-carrier protein]-C-terminal Gly-Gly + ATP + H(+) = [molybdopterin-synthase sulfur-carrier protein]-C-terminal Gly-Gly-AMP + diphosphate</text>
        <dbReference type="Rhea" id="RHEA:43616"/>
        <dbReference type="Rhea" id="RHEA-COMP:12159"/>
        <dbReference type="Rhea" id="RHEA-COMP:12202"/>
        <dbReference type="ChEBI" id="CHEBI:15378"/>
        <dbReference type="ChEBI" id="CHEBI:30616"/>
        <dbReference type="ChEBI" id="CHEBI:33019"/>
        <dbReference type="ChEBI" id="CHEBI:90618"/>
        <dbReference type="ChEBI" id="CHEBI:90778"/>
        <dbReference type="EC" id="2.7.7.80"/>
    </reaction>
</comment>
<comment type="catalytic activity">
    <reaction evidence="3">
        <text>[molybdopterin-synthase sulfur-carrier protein]-C-terminal Gly-Gly-AMP + S-sulfanyl-L-cysteinyl-[cysteine desulfurase] + AH2 = [molybdopterin-synthase sulfur-carrier protein]-C-terminal-Gly-aminoethanethioate + L-cysteinyl-[cysteine desulfurase] + A + AMP + 2 H(+)</text>
        <dbReference type="Rhea" id="RHEA:48612"/>
        <dbReference type="Rhea" id="RHEA-COMP:12157"/>
        <dbReference type="Rhea" id="RHEA-COMP:12158"/>
        <dbReference type="Rhea" id="RHEA-COMP:12159"/>
        <dbReference type="Rhea" id="RHEA-COMP:19907"/>
        <dbReference type="ChEBI" id="CHEBI:13193"/>
        <dbReference type="ChEBI" id="CHEBI:15378"/>
        <dbReference type="ChEBI" id="CHEBI:17499"/>
        <dbReference type="ChEBI" id="CHEBI:29950"/>
        <dbReference type="ChEBI" id="CHEBI:61963"/>
        <dbReference type="ChEBI" id="CHEBI:90618"/>
        <dbReference type="ChEBI" id="CHEBI:232372"/>
        <dbReference type="ChEBI" id="CHEBI:456215"/>
        <dbReference type="EC" id="2.8.1.11"/>
    </reaction>
</comment>
<comment type="cofactor">
    <cofactor evidence="3">
        <name>Zn(2+)</name>
        <dbReference type="ChEBI" id="CHEBI:29105"/>
    </cofactor>
    <text evidence="3">Binds 1 zinc ion per subunit.</text>
</comment>
<comment type="pathway">
    <text evidence="3">tRNA modification; 5-methoxycarbonylmethyl-2-thiouridine-tRNA biosynthesis.</text>
</comment>
<comment type="subcellular location">
    <subcellularLocation>
        <location evidence="2">Cytoplasm</location>
        <location evidence="2">Cytosol</location>
    </subcellularLocation>
</comment>
<comment type="similarity">
    <text evidence="3">In the N-terminal section; belongs to the HesA/MoeB/ThiF family. UBA4 subfamily.</text>
</comment>
<proteinExistence type="inferred from homology"/>
<reference key="1">
    <citation type="journal article" date="2011" name="PLoS Genet.">
        <title>Genomic analysis of the necrotrophic fungal pathogens Sclerotinia sclerotiorum and Botrytis cinerea.</title>
        <authorList>
            <person name="Amselem J."/>
            <person name="Cuomo C.A."/>
            <person name="van Kan J.A.L."/>
            <person name="Viaud M."/>
            <person name="Benito E.P."/>
            <person name="Couloux A."/>
            <person name="Coutinho P.M."/>
            <person name="de Vries R.P."/>
            <person name="Dyer P.S."/>
            <person name="Fillinger S."/>
            <person name="Fournier E."/>
            <person name="Gout L."/>
            <person name="Hahn M."/>
            <person name="Kohn L."/>
            <person name="Lapalu N."/>
            <person name="Plummer K.M."/>
            <person name="Pradier J.-M."/>
            <person name="Quevillon E."/>
            <person name="Sharon A."/>
            <person name="Simon A."/>
            <person name="ten Have A."/>
            <person name="Tudzynski B."/>
            <person name="Tudzynski P."/>
            <person name="Wincker P."/>
            <person name="Andrew M."/>
            <person name="Anthouard V."/>
            <person name="Beever R.E."/>
            <person name="Beffa R."/>
            <person name="Benoit I."/>
            <person name="Bouzid O."/>
            <person name="Brault B."/>
            <person name="Chen Z."/>
            <person name="Choquer M."/>
            <person name="Collemare J."/>
            <person name="Cotton P."/>
            <person name="Danchin E.G."/>
            <person name="Da Silva C."/>
            <person name="Gautier A."/>
            <person name="Giraud C."/>
            <person name="Giraud T."/>
            <person name="Gonzalez C."/>
            <person name="Grossetete S."/>
            <person name="Gueldener U."/>
            <person name="Henrissat B."/>
            <person name="Howlett B.J."/>
            <person name="Kodira C."/>
            <person name="Kretschmer M."/>
            <person name="Lappartient A."/>
            <person name="Leroch M."/>
            <person name="Levis C."/>
            <person name="Mauceli E."/>
            <person name="Neuveglise C."/>
            <person name="Oeser B."/>
            <person name="Pearson M."/>
            <person name="Poulain J."/>
            <person name="Poussereau N."/>
            <person name="Quesneville H."/>
            <person name="Rascle C."/>
            <person name="Schumacher J."/>
            <person name="Segurens B."/>
            <person name="Sexton A."/>
            <person name="Silva E."/>
            <person name="Sirven C."/>
            <person name="Soanes D.M."/>
            <person name="Talbot N.J."/>
            <person name="Templeton M."/>
            <person name="Yandava C."/>
            <person name="Yarden O."/>
            <person name="Zeng Q."/>
            <person name="Rollins J.A."/>
            <person name="Lebrun M.-H."/>
            <person name="Dickman M."/>
        </authorList>
    </citation>
    <scope>NUCLEOTIDE SEQUENCE [LARGE SCALE GENOMIC DNA]</scope>
    <source>
        <strain>ATCC 18683 / 1980 / Ss-1</strain>
    </source>
</reference>
<protein>
    <recommendedName>
        <fullName evidence="3">Adenylyltransferase and sulfurtransferase uba4</fullName>
    </recommendedName>
    <alternativeName>
        <fullName evidence="3">Common component for nitrate reductase and xanthine dehydrogenase protein F</fullName>
    </alternativeName>
    <alternativeName>
        <fullName evidence="3">Ubiquitin-like protein activator 4</fullName>
    </alternativeName>
    <domain>
        <recommendedName>
            <fullName evidence="3">Molybdopterin-synthase adenylyltransferase</fullName>
            <ecNumber evidence="3">2.7.7.80</ecNumber>
        </recommendedName>
        <alternativeName>
            <fullName evidence="3">Adenylyltransferase uba4</fullName>
        </alternativeName>
        <alternativeName>
            <fullName evidence="3">Sulfur carrier protein MOCS2A adenylyltransferase</fullName>
        </alternativeName>
    </domain>
    <domain>
        <recommendedName>
            <fullName evidence="3">Molybdopterin-synthase sulfurtransferase</fullName>
            <ecNumber evidence="3">2.8.1.11</ecNumber>
        </recommendedName>
        <alternativeName>
            <fullName evidence="3">Sulfur carrier protein MOCS2A sulfurtransferase</fullName>
        </alternativeName>
        <alternativeName>
            <fullName evidence="3">Sulfurtransferase uba4</fullName>
        </alternativeName>
    </domain>
</protein>
<evidence type="ECO:0000250" key="1"/>
<evidence type="ECO:0000250" key="2">
    <source>
        <dbReference type="UniProtKB" id="P38820"/>
    </source>
</evidence>
<evidence type="ECO:0000255" key="3">
    <source>
        <dbReference type="HAMAP-Rule" id="MF_03049"/>
    </source>
</evidence>
<keyword id="KW-0067">ATP-binding</keyword>
<keyword id="KW-0963">Cytoplasm</keyword>
<keyword id="KW-0479">Metal-binding</keyword>
<keyword id="KW-0501">Molybdenum cofactor biosynthesis</keyword>
<keyword id="KW-0511">Multifunctional enzyme</keyword>
<keyword id="KW-0547">Nucleotide-binding</keyword>
<keyword id="KW-0548">Nucleotidyltransferase</keyword>
<keyword id="KW-1185">Reference proteome</keyword>
<keyword id="KW-0808">Transferase</keyword>
<keyword id="KW-0819">tRNA processing</keyword>
<keyword id="KW-0833">Ubl conjugation pathway</keyword>
<keyword id="KW-0862">Zinc</keyword>